<dbReference type="EMBL" id="CP000758">
    <property type="protein sequence ID" value="ABS15238.1"/>
    <property type="molecule type" value="Genomic_DNA"/>
</dbReference>
<dbReference type="RefSeq" id="WP_010661094.1">
    <property type="nucleotide sequence ID" value="NC_009667.1"/>
</dbReference>
<dbReference type="SMR" id="A6X1Y4"/>
<dbReference type="STRING" id="439375.Oant_2525"/>
<dbReference type="GeneID" id="61317017"/>
<dbReference type="KEGG" id="oan:Oant_2525"/>
<dbReference type="eggNOG" id="COG0781">
    <property type="taxonomic scope" value="Bacteria"/>
</dbReference>
<dbReference type="HOGENOM" id="CLU_087843_4_0_5"/>
<dbReference type="PhylomeDB" id="A6X1Y4"/>
<dbReference type="Proteomes" id="UP000002301">
    <property type="component" value="Chromosome 1"/>
</dbReference>
<dbReference type="GO" id="GO:0005829">
    <property type="term" value="C:cytosol"/>
    <property type="evidence" value="ECO:0007669"/>
    <property type="project" value="TreeGrafter"/>
</dbReference>
<dbReference type="GO" id="GO:0003723">
    <property type="term" value="F:RNA binding"/>
    <property type="evidence" value="ECO:0007669"/>
    <property type="project" value="UniProtKB-UniRule"/>
</dbReference>
<dbReference type="GO" id="GO:0006353">
    <property type="term" value="P:DNA-templated transcription termination"/>
    <property type="evidence" value="ECO:0007669"/>
    <property type="project" value="UniProtKB-UniRule"/>
</dbReference>
<dbReference type="GO" id="GO:0031564">
    <property type="term" value="P:transcription antitermination"/>
    <property type="evidence" value="ECO:0007669"/>
    <property type="project" value="UniProtKB-KW"/>
</dbReference>
<dbReference type="Gene3D" id="1.10.940.10">
    <property type="entry name" value="NusB-like"/>
    <property type="match status" value="1"/>
</dbReference>
<dbReference type="HAMAP" id="MF_00073">
    <property type="entry name" value="NusB"/>
    <property type="match status" value="1"/>
</dbReference>
<dbReference type="InterPro" id="IPR035926">
    <property type="entry name" value="NusB-like_sf"/>
</dbReference>
<dbReference type="InterPro" id="IPR011605">
    <property type="entry name" value="NusB_fam"/>
</dbReference>
<dbReference type="InterPro" id="IPR006027">
    <property type="entry name" value="NusB_RsmB_TIM44"/>
</dbReference>
<dbReference type="NCBIfam" id="TIGR01951">
    <property type="entry name" value="nusB"/>
    <property type="match status" value="1"/>
</dbReference>
<dbReference type="PANTHER" id="PTHR11078:SF3">
    <property type="entry name" value="ANTITERMINATION NUSB DOMAIN-CONTAINING PROTEIN"/>
    <property type="match status" value="1"/>
</dbReference>
<dbReference type="PANTHER" id="PTHR11078">
    <property type="entry name" value="N UTILIZATION SUBSTANCE PROTEIN B-RELATED"/>
    <property type="match status" value="1"/>
</dbReference>
<dbReference type="Pfam" id="PF01029">
    <property type="entry name" value="NusB"/>
    <property type="match status" value="1"/>
</dbReference>
<dbReference type="SUPFAM" id="SSF48013">
    <property type="entry name" value="NusB-like"/>
    <property type="match status" value="1"/>
</dbReference>
<organism>
    <name type="scientific">Brucella anthropi (strain ATCC 49188 / DSM 6882 / CCUG 24695 / JCM 21032 / LMG 3331 / NBRC 15819 / NCTC 12168 / Alc 37)</name>
    <name type="common">Ochrobactrum anthropi</name>
    <dbReference type="NCBI Taxonomy" id="439375"/>
    <lineage>
        <taxon>Bacteria</taxon>
        <taxon>Pseudomonadati</taxon>
        <taxon>Pseudomonadota</taxon>
        <taxon>Alphaproteobacteria</taxon>
        <taxon>Hyphomicrobiales</taxon>
        <taxon>Brucellaceae</taxon>
        <taxon>Brucella/Ochrobactrum group</taxon>
        <taxon>Brucella</taxon>
    </lineage>
</organism>
<keyword id="KW-1185">Reference proteome</keyword>
<keyword id="KW-0694">RNA-binding</keyword>
<keyword id="KW-0804">Transcription</keyword>
<keyword id="KW-0889">Transcription antitermination</keyword>
<keyword id="KW-0805">Transcription regulation</keyword>
<reference key="1">
    <citation type="journal article" date="2011" name="J. Bacteriol.">
        <title>Genome of Ochrobactrum anthropi ATCC 49188 T, a versatile opportunistic pathogen and symbiont of several eukaryotic hosts.</title>
        <authorList>
            <person name="Chain P.S."/>
            <person name="Lang D.M."/>
            <person name="Comerci D.J."/>
            <person name="Malfatti S.A."/>
            <person name="Vergez L.M."/>
            <person name="Shin M."/>
            <person name="Ugalde R.A."/>
            <person name="Garcia E."/>
            <person name="Tolmasky M.E."/>
        </authorList>
    </citation>
    <scope>NUCLEOTIDE SEQUENCE [LARGE SCALE GENOMIC DNA]</scope>
    <source>
        <strain>ATCC 49188 / DSM 6882 / CCUG 24695 / JCM 21032 / LMG 3331 / NBRC 15819 / NCTC 12168 / Alc 37</strain>
    </source>
</reference>
<evidence type="ECO:0000255" key="1">
    <source>
        <dbReference type="HAMAP-Rule" id="MF_00073"/>
    </source>
</evidence>
<protein>
    <recommendedName>
        <fullName evidence="1">Transcription antitermination protein NusB</fullName>
    </recommendedName>
    <alternativeName>
        <fullName evidence="1">Antitermination factor NusB</fullName>
    </alternativeName>
</protein>
<name>NUSB_BRUA4</name>
<gene>
    <name evidence="1" type="primary">nusB</name>
    <name type="ordered locus">Oant_2525</name>
</gene>
<accession>A6X1Y4</accession>
<feature type="chain" id="PRO_1000023758" description="Transcription antitermination protein NusB">
    <location>
        <begin position="1"/>
        <end position="168"/>
    </location>
</feature>
<proteinExistence type="inferred from homology"/>
<comment type="function">
    <text evidence="1">Involved in transcription antitermination. Required for transcription of ribosomal RNA (rRNA) genes. Binds specifically to the boxA antiterminator sequence of the ribosomal RNA (rrn) operons.</text>
</comment>
<comment type="similarity">
    <text evidence="1">Belongs to the NusB family.</text>
</comment>
<sequence>MNSSTEGRPTPNLPRTANKRGVARLAAVQALYQMDVAGTGVLEVVAEYEAFRLGKEVDGTQYLDADPQWFRAIVAGVVDEQLKLDPMIHQALTEDWPLSRLDSTLRAILRAGAWELQTRKDVPTAVIVSEYVDIAKAFYTEDEPKLVNAVLDRLAFVIRGESRGVKPR</sequence>